<proteinExistence type="inferred from homology"/>
<accession>A7ESB8</accession>
<dbReference type="EC" id="3.7.1.3" evidence="1"/>
<dbReference type="EMBL" id="CH476631">
    <property type="protein sequence ID" value="EDN92360.1"/>
    <property type="molecule type" value="Genomic_DNA"/>
</dbReference>
<dbReference type="RefSeq" id="XP_001590483.1">
    <property type="nucleotide sequence ID" value="XM_001590433.1"/>
</dbReference>
<dbReference type="SMR" id="A7ESB8"/>
<dbReference type="FunCoup" id="A7ESB8">
    <property type="interactions" value="197"/>
</dbReference>
<dbReference type="STRING" id="665079.A7ESB8"/>
<dbReference type="EnsemblFungi" id="EDN92360">
    <property type="protein sequence ID" value="EDN92360"/>
    <property type="gene ID" value="SS1G_08223"/>
</dbReference>
<dbReference type="GeneID" id="5486837"/>
<dbReference type="KEGG" id="ssl:SS1G_08223"/>
<dbReference type="VEuPathDB" id="FungiDB:sscle_10g075610"/>
<dbReference type="eggNOG" id="KOG3846">
    <property type="taxonomic scope" value="Eukaryota"/>
</dbReference>
<dbReference type="HOGENOM" id="CLU_003433_4_0_1"/>
<dbReference type="InParanoid" id="A7ESB8"/>
<dbReference type="OMA" id="SHVAYRS"/>
<dbReference type="OrthoDB" id="5978656at2759"/>
<dbReference type="UniPathway" id="UPA00253">
    <property type="reaction ID" value="UER00329"/>
</dbReference>
<dbReference type="UniPathway" id="UPA00334">
    <property type="reaction ID" value="UER00455"/>
</dbReference>
<dbReference type="Proteomes" id="UP000001312">
    <property type="component" value="Unassembled WGS sequence"/>
</dbReference>
<dbReference type="GO" id="GO:0005737">
    <property type="term" value="C:cytoplasm"/>
    <property type="evidence" value="ECO:0000318"/>
    <property type="project" value="GO_Central"/>
</dbReference>
<dbReference type="GO" id="GO:0030429">
    <property type="term" value="F:kynureninase activity"/>
    <property type="evidence" value="ECO:0000318"/>
    <property type="project" value="GO_Central"/>
</dbReference>
<dbReference type="GO" id="GO:0030170">
    <property type="term" value="F:pyridoxal phosphate binding"/>
    <property type="evidence" value="ECO:0007669"/>
    <property type="project" value="UniProtKB-UniRule"/>
</dbReference>
<dbReference type="GO" id="GO:0034354">
    <property type="term" value="P:'de novo' NAD biosynthetic process from L-tryptophan"/>
    <property type="evidence" value="ECO:0007669"/>
    <property type="project" value="UniProtKB-UniRule"/>
</dbReference>
<dbReference type="GO" id="GO:0043420">
    <property type="term" value="P:anthranilate metabolic process"/>
    <property type="evidence" value="ECO:0000318"/>
    <property type="project" value="GO_Central"/>
</dbReference>
<dbReference type="GO" id="GO:0097053">
    <property type="term" value="P:L-kynurenine catabolic process"/>
    <property type="evidence" value="ECO:0007669"/>
    <property type="project" value="UniProtKB-UniRule"/>
</dbReference>
<dbReference type="GO" id="GO:0019441">
    <property type="term" value="P:L-tryptophan catabolic process to kynurenine"/>
    <property type="evidence" value="ECO:0000318"/>
    <property type="project" value="GO_Central"/>
</dbReference>
<dbReference type="GO" id="GO:0019805">
    <property type="term" value="P:quinolinate biosynthetic process"/>
    <property type="evidence" value="ECO:0007669"/>
    <property type="project" value="UniProtKB-UniRule"/>
</dbReference>
<dbReference type="FunFam" id="3.40.640.10:FF:000031">
    <property type="entry name" value="Kynureninase"/>
    <property type="match status" value="1"/>
</dbReference>
<dbReference type="Gene3D" id="3.90.1150.10">
    <property type="entry name" value="Aspartate Aminotransferase, domain 1"/>
    <property type="match status" value="1"/>
</dbReference>
<dbReference type="Gene3D" id="3.40.640.10">
    <property type="entry name" value="Type I PLP-dependent aspartate aminotransferase-like (Major domain)"/>
    <property type="match status" value="1"/>
</dbReference>
<dbReference type="HAMAP" id="MF_01970">
    <property type="entry name" value="Kynureninase"/>
    <property type="match status" value="1"/>
</dbReference>
<dbReference type="InterPro" id="IPR010111">
    <property type="entry name" value="Kynureninase"/>
</dbReference>
<dbReference type="InterPro" id="IPR015424">
    <property type="entry name" value="PyrdxlP-dep_Trfase"/>
</dbReference>
<dbReference type="InterPro" id="IPR015421">
    <property type="entry name" value="PyrdxlP-dep_Trfase_major"/>
</dbReference>
<dbReference type="InterPro" id="IPR015422">
    <property type="entry name" value="PyrdxlP-dep_Trfase_small"/>
</dbReference>
<dbReference type="NCBIfam" id="TIGR01814">
    <property type="entry name" value="kynureninase"/>
    <property type="match status" value="1"/>
</dbReference>
<dbReference type="PANTHER" id="PTHR14084">
    <property type="entry name" value="KYNURENINASE"/>
    <property type="match status" value="1"/>
</dbReference>
<dbReference type="PANTHER" id="PTHR14084:SF2">
    <property type="entry name" value="KYNURENINASE 2"/>
    <property type="match status" value="1"/>
</dbReference>
<dbReference type="Pfam" id="PF22580">
    <property type="entry name" value="KYNU_C"/>
    <property type="match status" value="1"/>
</dbReference>
<dbReference type="PIRSF" id="PIRSF038800">
    <property type="entry name" value="KYNU"/>
    <property type="match status" value="1"/>
</dbReference>
<dbReference type="SUPFAM" id="SSF53383">
    <property type="entry name" value="PLP-dependent transferases"/>
    <property type="match status" value="1"/>
</dbReference>
<gene>
    <name type="primary">bna5</name>
    <name type="ORF">SS1G_08223</name>
</gene>
<protein>
    <recommendedName>
        <fullName evidence="1">Kynureninase</fullName>
        <ecNumber evidence="1">3.7.1.3</ecNumber>
    </recommendedName>
    <alternativeName>
        <fullName evidence="1">Biosynthesis of nicotinic acid protein 5</fullName>
    </alternativeName>
    <alternativeName>
        <fullName evidence="1">L-kynurenine hydrolase</fullName>
    </alternativeName>
</protein>
<comment type="function">
    <text evidence="1">Catalyzes the cleavage of L-kynurenine (L-Kyn) and L-3-hydroxykynurenine (L-3OHKyn) into anthranilic acid (AA) and 3-hydroxyanthranilic acid (3-OHAA), respectively.</text>
</comment>
<comment type="catalytic activity">
    <reaction evidence="1">
        <text>L-kynurenine + H2O = anthranilate + L-alanine + H(+)</text>
        <dbReference type="Rhea" id="RHEA:16813"/>
        <dbReference type="ChEBI" id="CHEBI:15377"/>
        <dbReference type="ChEBI" id="CHEBI:15378"/>
        <dbReference type="ChEBI" id="CHEBI:16567"/>
        <dbReference type="ChEBI" id="CHEBI:57959"/>
        <dbReference type="ChEBI" id="CHEBI:57972"/>
        <dbReference type="EC" id="3.7.1.3"/>
    </reaction>
</comment>
<comment type="catalytic activity">
    <reaction evidence="1">
        <text>3-hydroxy-L-kynurenine + H2O = 3-hydroxyanthranilate + L-alanine + H(+)</text>
        <dbReference type="Rhea" id="RHEA:25143"/>
        <dbReference type="ChEBI" id="CHEBI:15377"/>
        <dbReference type="ChEBI" id="CHEBI:15378"/>
        <dbReference type="ChEBI" id="CHEBI:36559"/>
        <dbReference type="ChEBI" id="CHEBI:57972"/>
        <dbReference type="ChEBI" id="CHEBI:58125"/>
        <dbReference type="EC" id="3.7.1.3"/>
    </reaction>
</comment>
<comment type="cofactor">
    <cofactor evidence="1">
        <name>pyridoxal 5'-phosphate</name>
        <dbReference type="ChEBI" id="CHEBI:597326"/>
    </cofactor>
</comment>
<comment type="pathway">
    <text evidence="1">Amino-acid degradation; L-kynurenine degradation; L-alanine and anthranilate from L-kynurenine: step 1/1.</text>
</comment>
<comment type="pathway">
    <text evidence="1">Cofactor biosynthesis; NAD(+) biosynthesis; quinolinate from L-kynurenine: step 2/3.</text>
</comment>
<comment type="subunit">
    <text evidence="1">Homodimer.</text>
</comment>
<comment type="subcellular location">
    <subcellularLocation>
        <location evidence="1">Cytoplasm</location>
    </subcellularLocation>
</comment>
<comment type="similarity">
    <text evidence="1">Belongs to the kynureninase family.</text>
</comment>
<keyword id="KW-0963">Cytoplasm</keyword>
<keyword id="KW-0378">Hydrolase</keyword>
<keyword id="KW-0662">Pyridine nucleotide biosynthesis</keyword>
<keyword id="KW-0663">Pyridoxal phosphate</keyword>
<keyword id="KW-1185">Reference proteome</keyword>
<feature type="chain" id="PRO_0000360872" description="Kynureninase">
    <location>
        <begin position="1"/>
        <end position="475"/>
    </location>
</feature>
<feature type="binding site" evidence="1">
    <location>
        <position position="141"/>
    </location>
    <ligand>
        <name>pyridoxal 5'-phosphate</name>
        <dbReference type="ChEBI" id="CHEBI:597326"/>
    </ligand>
</feature>
<feature type="binding site" evidence="1">
    <location>
        <position position="142"/>
    </location>
    <ligand>
        <name>pyridoxal 5'-phosphate</name>
        <dbReference type="ChEBI" id="CHEBI:597326"/>
    </ligand>
</feature>
<feature type="binding site" evidence="1">
    <location>
        <begin position="169"/>
        <end position="172"/>
    </location>
    <ligand>
        <name>pyridoxal 5'-phosphate</name>
        <dbReference type="ChEBI" id="CHEBI:597326"/>
    </ligand>
</feature>
<feature type="binding site" evidence="1">
    <location>
        <position position="254"/>
    </location>
    <ligand>
        <name>pyridoxal 5'-phosphate</name>
        <dbReference type="ChEBI" id="CHEBI:597326"/>
    </ligand>
</feature>
<feature type="binding site" evidence="1">
    <location>
        <position position="257"/>
    </location>
    <ligand>
        <name>pyridoxal 5'-phosphate</name>
        <dbReference type="ChEBI" id="CHEBI:597326"/>
    </ligand>
</feature>
<feature type="binding site" evidence="1">
    <location>
        <position position="279"/>
    </location>
    <ligand>
        <name>pyridoxal 5'-phosphate</name>
        <dbReference type="ChEBI" id="CHEBI:597326"/>
    </ligand>
</feature>
<feature type="binding site" evidence="1">
    <location>
        <position position="319"/>
    </location>
    <ligand>
        <name>pyridoxal 5'-phosphate</name>
        <dbReference type="ChEBI" id="CHEBI:597326"/>
    </ligand>
</feature>
<feature type="binding site" evidence="1">
    <location>
        <position position="347"/>
    </location>
    <ligand>
        <name>pyridoxal 5'-phosphate</name>
        <dbReference type="ChEBI" id="CHEBI:597326"/>
    </ligand>
</feature>
<feature type="modified residue" description="N6-(pyridoxal phosphate)lysine" evidence="1">
    <location>
        <position position="280"/>
    </location>
</feature>
<name>KYNU_SCLS1</name>
<organism>
    <name type="scientific">Sclerotinia sclerotiorum (strain ATCC 18683 / 1980 / Ss-1)</name>
    <name type="common">White mold</name>
    <name type="synonym">Whetzelinia sclerotiorum</name>
    <dbReference type="NCBI Taxonomy" id="665079"/>
    <lineage>
        <taxon>Eukaryota</taxon>
        <taxon>Fungi</taxon>
        <taxon>Dikarya</taxon>
        <taxon>Ascomycota</taxon>
        <taxon>Pezizomycotina</taxon>
        <taxon>Leotiomycetes</taxon>
        <taxon>Helotiales</taxon>
        <taxon>Sclerotiniaceae</taxon>
        <taxon>Sclerotinia</taxon>
    </lineage>
</organism>
<sequence length="475" mass="52956">MGSIAKEEQPSKVEKPTFSSKANTLEYAQSLDANDHMRRFRDQFIIPSKANIKATKLEKPGLSDESSIYFCGNSLGLQPKCVKEYLQAHLDTWSSIGVHGHFRDLEDSPLTQWQLLAEHASKQCAPIVGAKASEVAMMGTLTTNLHLLMASFYTPTPEKNKIIMEWKAFPSDHYAIESQIRGHGYNPQEAMVMIGPEEGSYEISTEKILRTIDEHASTTALVLLPGIQYYTGQLFDVKTITAYAQSKGLIVGWDLAHAAGNVPLQLHDWNVDFAVWCTYKYMNAGPGSIAGAFIHERHGEVDYSEGEEKPKYRHRLMGWYGGDQSCRFLMNNKFRPSPGASGYQVSNPSVVDLTSLCAALSIFNQTSMEEISQKTLHLTAYLEHLLLTSNPSNTNPAFRIITPSDPSARGTQLSVLLKPGRLETLSDMLEEAGIVADKRKPDVIRVAPVPLYNTYEDVWRFVQIFNAALEKCEEA</sequence>
<evidence type="ECO:0000255" key="1">
    <source>
        <dbReference type="HAMAP-Rule" id="MF_03017"/>
    </source>
</evidence>
<reference key="1">
    <citation type="journal article" date="2011" name="PLoS Genet.">
        <title>Genomic analysis of the necrotrophic fungal pathogens Sclerotinia sclerotiorum and Botrytis cinerea.</title>
        <authorList>
            <person name="Amselem J."/>
            <person name="Cuomo C.A."/>
            <person name="van Kan J.A.L."/>
            <person name="Viaud M."/>
            <person name="Benito E.P."/>
            <person name="Couloux A."/>
            <person name="Coutinho P.M."/>
            <person name="de Vries R.P."/>
            <person name="Dyer P.S."/>
            <person name="Fillinger S."/>
            <person name="Fournier E."/>
            <person name="Gout L."/>
            <person name="Hahn M."/>
            <person name="Kohn L."/>
            <person name="Lapalu N."/>
            <person name="Plummer K.M."/>
            <person name="Pradier J.-M."/>
            <person name="Quevillon E."/>
            <person name="Sharon A."/>
            <person name="Simon A."/>
            <person name="ten Have A."/>
            <person name="Tudzynski B."/>
            <person name="Tudzynski P."/>
            <person name="Wincker P."/>
            <person name="Andrew M."/>
            <person name="Anthouard V."/>
            <person name="Beever R.E."/>
            <person name="Beffa R."/>
            <person name="Benoit I."/>
            <person name="Bouzid O."/>
            <person name="Brault B."/>
            <person name="Chen Z."/>
            <person name="Choquer M."/>
            <person name="Collemare J."/>
            <person name="Cotton P."/>
            <person name="Danchin E.G."/>
            <person name="Da Silva C."/>
            <person name="Gautier A."/>
            <person name="Giraud C."/>
            <person name="Giraud T."/>
            <person name="Gonzalez C."/>
            <person name="Grossetete S."/>
            <person name="Gueldener U."/>
            <person name="Henrissat B."/>
            <person name="Howlett B.J."/>
            <person name="Kodira C."/>
            <person name="Kretschmer M."/>
            <person name="Lappartient A."/>
            <person name="Leroch M."/>
            <person name="Levis C."/>
            <person name="Mauceli E."/>
            <person name="Neuveglise C."/>
            <person name="Oeser B."/>
            <person name="Pearson M."/>
            <person name="Poulain J."/>
            <person name="Poussereau N."/>
            <person name="Quesneville H."/>
            <person name="Rascle C."/>
            <person name="Schumacher J."/>
            <person name="Segurens B."/>
            <person name="Sexton A."/>
            <person name="Silva E."/>
            <person name="Sirven C."/>
            <person name="Soanes D.M."/>
            <person name="Talbot N.J."/>
            <person name="Templeton M."/>
            <person name="Yandava C."/>
            <person name="Yarden O."/>
            <person name="Zeng Q."/>
            <person name="Rollins J.A."/>
            <person name="Lebrun M.-H."/>
            <person name="Dickman M."/>
        </authorList>
    </citation>
    <scope>NUCLEOTIDE SEQUENCE [LARGE SCALE GENOMIC DNA]</scope>
    <source>
        <strain>ATCC 18683 / 1980 / Ss-1</strain>
    </source>
</reference>